<organism>
    <name type="scientific">Streptomyces avermitilis (strain ATCC 31267 / DSM 46492 / JCM 5070 / NBRC 14893 / NCIMB 12804 / NRRL 8165 / MA-4680)</name>
    <dbReference type="NCBI Taxonomy" id="227882"/>
    <lineage>
        <taxon>Bacteria</taxon>
        <taxon>Bacillati</taxon>
        <taxon>Actinomycetota</taxon>
        <taxon>Actinomycetes</taxon>
        <taxon>Kitasatosporales</taxon>
        <taxon>Streptomycetaceae</taxon>
        <taxon>Streptomyces</taxon>
    </lineage>
</organism>
<reference key="1">
    <citation type="journal article" date="2001" name="Proc. Natl. Acad. Sci. U.S.A.">
        <title>Genome sequence of an industrial microorganism Streptomyces avermitilis: deducing the ability of producing secondary metabolites.</title>
        <authorList>
            <person name="Omura S."/>
            <person name="Ikeda H."/>
            <person name="Ishikawa J."/>
            <person name="Hanamoto A."/>
            <person name="Takahashi C."/>
            <person name="Shinose M."/>
            <person name="Takahashi Y."/>
            <person name="Horikawa H."/>
            <person name="Nakazawa H."/>
            <person name="Osonoe T."/>
            <person name="Kikuchi H."/>
            <person name="Shiba T."/>
            <person name="Sakaki Y."/>
            <person name="Hattori M."/>
        </authorList>
    </citation>
    <scope>NUCLEOTIDE SEQUENCE [LARGE SCALE GENOMIC DNA]</scope>
    <source>
        <strain>ATCC 31267 / DSM 46492 / JCM 5070 / NBRC 14893 / NCIMB 12804 / NRRL 8165 / MA-4680</strain>
    </source>
</reference>
<reference key="2">
    <citation type="journal article" date="2003" name="Nat. Biotechnol.">
        <title>Complete genome sequence and comparative analysis of the industrial microorganism Streptomyces avermitilis.</title>
        <authorList>
            <person name="Ikeda H."/>
            <person name="Ishikawa J."/>
            <person name="Hanamoto A."/>
            <person name="Shinose M."/>
            <person name="Kikuchi H."/>
            <person name="Shiba T."/>
            <person name="Sakaki Y."/>
            <person name="Hattori M."/>
            <person name="Omura S."/>
        </authorList>
    </citation>
    <scope>NUCLEOTIDE SEQUENCE [LARGE SCALE GENOMIC DNA]</scope>
    <source>
        <strain>ATCC 31267 / DSM 46492 / JCM 5070 / NBRC 14893 / NCIMB 12804 / NRRL 8165 / MA-4680</strain>
    </source>
</reference>
<feature type="chain" id="PRO_0000189785" description="Gamma-glutamyl phosphate reductase">
    <location>
        <begin position="1"/>
        <end position="428"/>
    </location>
</feature>
<gene>
    <name evidence="1" type="primary">proA</name>
    <name type="ordered locus">SAV_5473</name>
</gene>
<accession>Q82C81</accession>
<keyword id="KW-0028">Amino-acid biosynthesis</keyword>
<keyword id="KW-0963">Cytoplasm</keyword>
<keyword id="KW-0521">NADP</keyword>
<keyword id="KW-0560">Oxidoreductase</keyword>
<keyword id="KW-0641">Proline biosynthesis</keyword>
<keyword id="KW-1185">Reference proteome</keyword>
<name>PROA_STRAW</name>
<sequence>MTTLSPYDSMTPVTQAAYRAKAAAADLAPLPRAEKDDALLAIADALEVRTSEIVAANAKDVERAREAGTSEAIIDRLTLTPERVRAIAADVRDVVALPDPVGEVVRGSTLPNGIDLRQVRVPLGVVGIIYEARPNVTVDAAALCLKSGNAVLLRGSASAYESNTALVRVLRDAVGGAGLPADAVQLVPGESRDSVRELMRARGLVDVLIPRGGASLIRTVVEESTVPVIETGTGNCHVYVDAQADLDMAVDILINSKAQRPSVCNSAETLLVHQDIAAEFLPRALDALADAGVTVHADERVLAYAKDSKATVVEATTEDWDTEYLSYDIAAAVVDSLDRAVAHIRLWSSGHTEAIVTTSQQAARRFTQLVDSTTVAVNASTRFTDGGEFGFGAEIGISTQKLHARGPMGLPELTSTKYIVTGDGHVRR</sequence>
<dbReference type="EC" id="1.2.1.41" evidence="1"/>
<dbReference type="EMBL" id="BA000030">
    <property type="protein sequence ID" value="BAC73185.1"/>
    <property type="molecule type" value="Genomic_DNA"/>
</dbReference>
<dbReference type="RefSeq" id="WP_010986875.1">
    <property type="nucleotide sequence ID" value="NZ_JZJK01000066.1"/>
</dbReference>
<dbReference type="SMR" id="Q82C81"/>
<dbReference type="GeneID" id="41542565"/>
<dbReference type="KEGG" id="sma:SAVERM_5473"/>
<dbReference type="eggNOG" id="COG0014">
    <property type="taxonomic scope" value="Bacteria"/>
</dbReference>
<dbReference type="HOGENOM" id="CLU_030231_0_0_11"/>
<dbReference type="OrthoDB" id="9809970at2"/>
<dbReference type="UniPathway" id="UPA00098">
    <property type="reaction ID" value="UER00360"/>
</dbReference>
<dbReference type="Proteomes" id="UP000000428">
    <property type="component" value="Chromosome"/>
</dbReference>
<dbReference type="GO" id="GO:0005737">
    <property type="term" value="C:cytoplasm"/>
    <property type="evidence" value="ECO:0007669"/>
    <property type="project" value="UniProtKB-SubCell"/>
</dbReference>
<dbReference type="GO" id="GO:0004350">
    <property type="term" value="F:glutamate-5-semialdehyde dehydrogenase activity"/>
    <property type="evidence" value="ECO:0007669"/>
    <property type="project" value="UniProtKB-UniRule"/>
</dbReference>
<dbReference type="GO" id="GO:0050661">
    <property type="term" value="F:NADP binding"/>
    <property type="evidence" value="ECO:0007669"/>
    <property type="project" value="InterPro"/>
</dbReference>
<dbReference type="GO" id="GO:0055129">
    <property type="term" value="P:L-proline biosynthetic process"/>
    <property type="evidence" value="ECO:0007669"/>
    <property type="project" value="UniProtKB-UniRule"/>
</dbReference>
<dbReference type="CDD" id="cd07079">
    <property type="entry name" value="ALDH_F18-19_ProA-GPR"/>
    <property type="match status" value="1"/>
</dbReference>
<dbReference type="FunFam" id="3.40.309.10:FF:000006">
    <property type="entry name" value="Gamma-glutamyl phosphate reductase"/>
    <property type="match status" value="1"/>
</dbReference>
<dbReference type="Gene3D" id="3.40.605.10">
    <property type="entry name" value="Aldehyde Dehydrogenase, Chain A, domain 1"/>
    <property type="match status" value="1"/>
</dbReference>
<dbReference type="Gene3D" id="3.40.309.10">
    <property type="entry name" value="Aldehyde Dehydrogenase, Chain A, domain 2"/>
    <property type="match status" value="1"/>
</dbReference>
<dbReference type="HAMAP" id="MF_00412">
    <property type="entry name" value="ProA"/>
    <property type="match status" value="1"/>
</dbReference>
<dbReference type="InterPro" id="IPR016161">
    <property type="entry name" value="Ald_DH/histidinol_DH"/>
</dbReference>
<dbReference type="InterPro" id="IPR016163">
    <property type="entry name" value="Ald_DH_C"/>
</dbReference>
<dbReference type="InterPro" id="IPR016162">
    <property type="entry name" value="Ald_DH_N"/>
</dbReference>
<dbReference type="InterPro" id="IPR015590">
    <property type="entry name" value="Aldehyde_DH_dom"/>
</dbReference>
<dbReference type="InterPro" id="IPR020593">
    <property type="entry name" value="G-glutamylP_reductase_CS"/>
</dbReference>
<dbReference type="InterPro" id="IPR012134">
    <property type="entry name" value="Glu-5-SA_DH"/>
</dbReference>
<dbReference type="InterPro" id="IPR000965">
    <property type="entry name" value="GPR_dom"/>
</dbReference>
<dbReference type="NCBIfam" id="NF001221">
    <property type="entry name" value="PRK00197.1"/>
    <property type="match status" value="1"/>
</dbReference>
<dbReference type="NCBIfam" id="TIGR00407">
    <property type="entry name" value="proA"/>
    <property type="match status" value="1"/>
</dbReference>
<dbReference type="PANTHER" id="PTHR11063:SF8">
    <property type="entry name" value="DELTA-1-PYRROLINE-5-CARBOXYLATE SYNTHASE"/>
    <property type="match status" value="1"/>
</dbReference>
<dbReference type="PANTHER" id="PTHR11063">
    <property type="entry name" value="GLUTAMATE SEMIALDEHYDE DEHYDROGENASE"/>
    <property type="match status" value="1"/>
</dbReference>
<dbReference type="Pfam" id="PF00171">
    <property type="entry name" value="Aldedh"/>
    <property type="match status" value="1"/>
</dbReference>
<dbReference type="PIRSF" id="PIRSF000151">
    <property type="entry name" value="GPR"/>
    <property type="match status" value="1"/>
</dbReference>
<dbReference type="SUPFAM" id="SSF53720">
    <property type="entry name" value="ALDH-like"/>
    <property type="match status" value="1"/>
</dbReference>
<dbReference type="PROSITE" id="PS01223">
    <property type="entry name" value="PROA"/>
    <property type="match status" value="1"/>
</dbReference>
<comment type="function">
    <text evidence="1">Catalyzes the NADPH-dependent reduction of L-glutamate 5-phosphate into L-glutamate 5-semialdehyde and phosphate. The product spontaneously undergoes cyclization to form 1-pyrroline-5-carboxylate.</text>
</comment>
<comment type="catalytic activity">
    <reaction evidence="1">
        <text>L-glutamate 5-semialdehyde + phosphate + NADP(+) = L-glutamyl 5-phosphate + NADPH + H(+)</text>
        <dbReference type="Rhea" id="RHEA:19541"/>
        <dbReference type="ChEBI" id="CHEBI:15378"/>
        <dbReference type="ChEBI" id="CHEBI:43474"/>
        <dbReference type="ChEBI" id="CHEBI:57783"/>
        <dbReference type="ChEBI" id="CHEBI:58066"/>
        <dbReference type="ChEBI" id="CHEBI:58274"/>
        <dbReference type="ChEBI" id="CHEBI:58349"/>
        <dbReference type="EC" id="1.2.1.41"/>
    </reaction>
</comment>
<comment type="pathway">
    <text evidence="1">Amino-acid biosynthesis; L-proline biosynthesis; L-glutamate 5-semialdehyde from L-glutamate: step 2/2.</text>
</comment>
<comment type="subcellular location">
    <subcellularLocation>
        <location evidence="1">Cytoplasm</location>
    </subcellularLocation>
</comment>
<comment type="similarity">
    <text evidence="1">Belongs to the gamma-glutamyl phosphate reductase family.</text>
</comment>
<protein>
    <recommendedName>
        <fullName evidence="1">Gamma-glutamyl phosphate reductase</fullName>
        <shortName evidence="1">GPR</shortName>
        <ecNumber evidence="1">1.2.1.41</ecNumber>
    </recommendedName>
    <alternativeName>
        <fullName evidence="1">Glutamate-5-semialdehyde dehydrogenase</fullName>
    </alternativeName>
    <alternativeName>
        <fullName evidence="1">Glutamyl-gamma-semialdehyde dehydrogenase</fullName>
        <shortName evidence="1">GSA dehydrogenase</shortName>
    </alternativeName>
</protein>
<proteinExistence type="inferred from homology"/>
<evidence type="ECO:0000255" key="1">
    <source>
        <dbReference type="HAMAP-Rule" id="MF_00412"/>
    </source>
</evidence>